<accession>O36369</accession>
<feature type="chain" id="PRO_0000405752" description="Capsid vertex component 2">
    <location>
        <begin position="1"/>
        <end position="556"/>
    </location>
</feature>
<feature type="region of interest" description="Interaction with major capsid protein/MCP" evidence="1">
    <location>
        <begin position="1"/>
        <end position="54"/>
    </location>
</feature>
<feature type="region of interest" description="Disordered" evidence="2">
    <location>
        <begin position="104"/>
        <end position="136"/>
    </location>
</feature>
<feature type="compositionally biased region" description="Pro residues" evidence="2">
    <location>
        <begin position="121"/>
        <end position="132"/>
    </location>
</feature>
<comment type="function">
    <text evidence="1">Capsid vertex-specific component that plays a role during viral DNA encapsidation, assuring correct genome cleavage and presumably stabilizing capsids that contain full-length viral genomes. Participates in the interaction between the capsid and the tegument through interaction with the large tegument protein/LTP.</text>
</comment>
<comment type="subunit">
    <text evidence="1">Heterodimerizes with CVC1. Interacts with major capsid protein/MCP and triplex capsid protein 1/TRX1 at the pentamer vertices. Interacts with the large tegument protein/LTP.</text>
</comment>
<comment type="subcellular location">
    <subcellularLocation>
        <location evidence="1">Virion</location>
    </subcellularLocation>
    <subcellularLocation>
        <location evidence="1">Host nucleus</location>
    </subcellularLocation>
</comment>
<comment type="similarity">
    <text evidence="1">Belongs to the herpesviridae CVC2 protein family.</text>
</comment>
<organismHost>
    <name type="scientific">Connochaetes taurinus</name>
    <name type="common">Blue wildebeest</name>
    <dbReference type="NCBI Taxonomy" id="9927"/>
</organismHost>
<proteinExistence type="inferred from homology"/>
<evidence type="ECO:0000255" key="1">
    <source>
        <dbReference type="HAMAP-Rule" id="MF_04025"/>
    </source>
</evidence>
<evidence type="ECO:0000256" key="2">
    <source>
        <dbReference type="SAM" id="MobiDB-lite"/>
    </source>
</evidence>
<sequence length="556" mass="61327">MWPVGSSYTRACSVQRWPKRCVYWAPSPQNVLEINPHRFQESRRSAALYRKHVVESKLNLIKKELLKAELDNVVQTNLANSQAITDYLTTLEDLANILVDRAQQPASSNQGGARPQTDPHVPQPAPAIPSAPPKENTTTVVIAPGDSGYTFSTNFLREFLSGLYATSASWLPSYGPWFTAMTANAMQRRVFPKELKGTANLKNSTSLKLITEVLTTVASINVDFYTDLRNLSDFNAALCILNAYYCKTQGHPLPASREELLDNLGPKIAALVADIKGLGSDSNITFTFTFSSGQQAATIAPVNGDGRYNKDFFSNHKIFRLLVAKEVVLLPNFTNVPGATDGPDYIYALTSALFSDNIPPFGNYQLNLRSGIKGVEYLILVYLTLANAQLSKPDGRRLHLKALLGAAFEHSSKVQLFKRDEVFTFLMKEYVLPILSHNNNISTTELFPGMALAALEVGNQINFDPNKHFVNLAGTKFTKIFNVLNQKLMFKDVRELLVAKSELRVALENGLAATLNSIAPVNAVVEVIQKQFGGGDDYDRLYFLVLGCLPVTVAVV</sequence>
<name>CVC2_ALHV1</name>
<protein>
    <recommendedName>
        <fullName evidence="1">Capsid vertex component 2</fullName>
    </recommendedName>
</protein>
<keyword id="KW-0167">Capsid protein</keyword>
<keyword id="KW-1048">Host nucleus</keyword>
<keyword id="KW-0945">Host-virus interaction</keyword>
<keyword id="KW-1185">Reference proteome</keyword>
<keyword id="KW-0231">Viral genome packaging</keyword>
<keyword id="KW-1163">Viral penetration into host nucleus</keyword>
<keyword id="KW-1188">Viral release from host cell</keyword>
<keyword id="KW-0946">Virion</keyword>
<keyword id="KW-1160">Virus entry into host cell</keyword>
<gene>
    <name evidence="1" type="primary">CVC2</name>
    <name type="ordered locus">19</name>
</gene>
<organism>
    <name type="scientific">Alcelaphine herpesvirus 1 (strain C500)</name>
    <name type="common">AlHV-1</name>
    <name type="synonym">Malignant catarrhal fever virus</name>
    <dbReference type="NCBI Taxonomy" id="654901"/>
    <lineage>
        <taxon>Viruses</taxon>
        <taxon>Duplodnaviria</taxon>
        <taxon>Heunggongvirae</taxon>
        <taxon>Peploviricota</taxon>
        <taxon>Herviviricetes</taxon>
        <taxon>Herpesvirales</taxon>
        <taxon>Orthoherpesviridae</taxon>
        <taxon>Gammaherpesvirinae</taxon>
        <taxon>Macavirus</taxon>
        <taxon>Macavirus alcelaphinegamma1</taxon>
    </lineage>
</organism>
<reference key="1">
    <citation type="journal article" date="1997" name="J. Virol.">
        <title>Primary structure of the alcelaphine herpesvirus 1 genome.</title>
        <authorList>
            <person name="Ensser A."/>
            <person name="Pflanz R."/>
            <person name="Fleckenstein B."/>
        </authorList>
    </citation>
    <scope>NUCLEOTIDE SEQUENCE [LARGE SCALE GENOMIC DNA]</scope>
</reference>
<dbReference type="EMBL" id="AF005370">
    <property type="protein sequence ID" value="AAC58066.1"/>
    <property type="molecule type" value="Genomic_DNA"/>
</dbReference>
<dbReference type="PIR" id="T03114">
    <property type="entry name" value="T03114"/>
</dbReference>
<dbReference type="RefSeq" id="NP_065518.1">
    <property type="nucleotide sequence ID" value="NC_002531.1"/>
</dbReference>
<dbReference type="SMR" id="O36369"/>
<dbReference type="KEGG" id="vg:911754"/>
<dbReference type="Proteomes" id="UP000000941">
    <property type="component" value="Segment"/>
</dbReference>
<dbReference type="GO" id="GO:0043657">
    <property type="term" value="C:host cell"/>
    <property type="evidence" value="ECO:0007669"/>
    <property type="project" value="GOC"/>
</dbReference>
<dbReference type="GO" id="GO:0042025">
    <property type="term" value="C:host cell nucleus"/>
    <property type="evidence" value="ECO:0007669"/>
    <property type="project" value="UniProtKB-SubCell"/>
</dbReference>
<dbReference type="GO" id="GO:0019028">
    <property type="term" value="C:viral capsid"/>
    <property type="evidence" value="ECO:0007669"/>
    <property type="project" value="UniProtKB-KW"/>
</dbReference>
<dbReference type="GO" id="GO:0046718">
    <property type="term" value="P:symbiont entry into host cell"/>
    <property type="evidence" value="ECO:0007669"/>
    <property type="project" value="UniProtKB-KW"/>
</dbReference>
<dbReference type="GO" id="GO:0019072">
    <property type="term" value="P:viral genome packaging"/>
    <property type="evidence" value="ECO:0007669"/>
    <property type="project" value="InterPro"/>
</dbReference>
<dbReference type="GO" id="GO:0075732">
    <property type="term" value="P:viral penetration into host nucleus"/>
    <property type="evidence" value="ECO:0007669"/>
    <property type="project" value="UniProtKB-KW"/>
</dbReference>
<dbReference type="HAMAP" id="MF_04025">
    <property type="entry name" value="HSV_CVC2"/>
    <property type="match status" value="1"/>
</dbReference>
<dbReference type="InterPro" id="IPR002493">
    <property type="entry name" value="Herpes_UL25"/>
</dbReference>
<dbReference type="Pfam" id="PF01499">
    <property type="entry name" value="Herpes_UL25"/>
    <property type="match status" value="1"/>
</dbReference>